<keyword id="KW-0002">3D-structure</keyword>
<keyword id="KW-0025">Alternative splicing</keyword>
<keyword id="KW-0106">Calcium</keyword>
<keyword id="KW-0963">Cytoplasm</keyword>
<keyword id="KW-0378">Hydrolase</keyword>
<keyword id="KW-0479">Metal-binding</keyword>
<keyword id="KW-1267">Proteomics identification</keyword>
<keyword id="KW-1185">Reference proteome</keyword>
<keyword id="KW-0862">Zinc</keyword>
<proteinExistence type="evidence at protein level"/>
<protein>
    <recommendedName>
        <fullName>Regucalcin</fullName>
        <shortName>RC</shortName>
    </recommendedName>
    <alternativeName>
        <fullName>Gluconolactonase</fullName>
        <shortName>GNL</shortName>
        <ecNumber>3.1.1.17</ecNumber>
    </alternativeName>
    <alternativeName>
        <fullName>Senescence marker protein 30</fullName>
        <shortName>SMP-30</shortName>
    </alternativeName>
</protein>
<reference key="1">
    <citation type="journal article" date="1995" name="Biochim. Biophys. Acta">
        <title>Isolation of cDNA clone encoding human homologue of senescence marker protein-30 (SMP30) and its location on the X chromosome.</title>
        <authorList>
            <person name="Fujita T."/>
            <person name="Mandel J.-L."/>
            <person name="Shirasawa T."/>
            <person name="Hino O."/>
            <person name="Shirai T."/>
            <person name="Maruyama N."/>
        </authorList>
    </citation>
    <scope>NUCLEOTIDE SEQUENCE [MRNA] (ISOFORM 1)</scope>
    <source>
        <tissue>Liver</tissue>
    </source>
</reference>
<reference key="2">
    <citation type="journal article" date="2000" name="Int. J. Mol. Med.">
        <title>Transcript heterogeneity of the human gene for Ca2+-binding protein regucalcin.</title>
        <authorList>
            <person name="Misawa H."/>
            <person name="Yamaguchi M."/>
        </authorList>
    </citation>
    <scope>NUCLEOTIDE SEQUENCE [MRNA] (ISOFORM 1)</scope>
    <source>
        <tissue>Liver</tissue>
    </source>
</reference>
<reference key="3">
    <citation type="journal article" date="2004" name="Nat. Genet.">
        <title>Complete sequencing and characterization of 21,243 full-length human cDNAs.</title>
        <authorList>
            <person name="Ota T."/>
            <person name="Suzuki Y."/>
            <person name="Nishikawa T."/>
            <person name="Otsuki T."/>
            <person name="Sugiyama T."/>
            <person name="Irie R."/>
            <person name="Wakamatsu A."/>
            <person name="Hayashi K."/>
            <person name="Sato H."/>
            <person name="Nagai K."/>
            <person name="Kimura K."/>
            <person name="Makita H."/>
            <person name="Sekine M."/>
            <person name="Obayashi M."/>
            <person name="Nishi T."/>
            <person name="Shibahara T."/>
            <person name="Tanaka T."/>
            <person name="Ishii S."/>
            <person name="Yamamoto J."/>
            <person name="Saito K."/>
            <person name="Kawai Y."/>
            <person name="Isono Y."/>
            <person name="Nakamura Y."/>
            <person name="Nagahari K."/>
            <person name="Murakami K."/>
            <person name="Yasuda T."/>
            <person name="Iwayanagi T."/>
            <person name="Wagatsuma M."/>
            <person name="Shiratori A."/>
            <person name="Sudo H."/>
            <person name="Hosoiri T."/>
            <person name="Kaku Y."/>
            <person name="Kodaira H."/>
            <person name="Kondo H."/>
            <person name="Sugawara M."/>
            <person name="Takahashi M."/>
            <person name="Kanda K."/>
            <person name="Yokoi T."/>
            <person name="Furuya T."/>
            <person name="Kikkawa E."/>
            <person name="Omura Y."/>
            <person name="Abe K."/>
            <person name="Kamihara K."/>
            <person name="Katsuta N."/>
            <person name="Sato K."/>
            <person name="Tanikawa M."/>
            <person name="Yamazaki M."/>
            <person name="Ninomiya K."/>
            <person name="Ishibashi T."/>
            <person name="Yamashita H."/>
            <person name="Murakawa K."/>
            <person name="Fujimori K."/>
            <person name="Tanai H."/>
            <person name="Kimata M."/>
            <person name="Watanabe M."/>
            <person name="Hiraoka S."/>
            <person name="Chiba Y."/>
            <person name="Ishida S."/>
            <person name="Ono Y."/>
            <person name="Takiguchi S."/>
            <person name="Watanabe S."/>
            <person name="Yosida M."/>
            <person name="Hotuta T."/>
            <person name="Kusano J."/>
            <person name="Kanehori K."/>
            <person name="Takahashi-Fujii A."/>
            <person name="Hara H."/>
            <person name="Tanase T.-O."/>
            <person name="Nomura Y."/>
            <person name="Togiya S."/>
            <person name="Komai F."/>
            <person name="Hara R."/>
            <person name="Takeuchi K."/>
            <person name="Arita M."/>
            <person name="Imose N."/>
            <person name="Musashino K."/>
            <person name="Yuuki H."/>
            <person name="Oshima A."/>
            <person name="Sasaki N."/>
            <person name="Aotsuka S."/>
            <person name="Yoshikawa Y."/>
            <person name="Matsunawa H."/>
            <person name="Ichihara T."/>
            <person name="Shiohata N."/>
            <person name="Sano S."/>
            <person name="Moriya S."/>
            <person name="Momiyama H."/>
            <person name="Satoh N."/>
            <person name="Takami S."/>
            <person name="Terashima Y."/>
            <person name="Suzuki O."/>
            <person name="Nakagawa S."/>
            <person name="Senoh A."/>
            <person name="Mizoguchi H."/>
            <person name="Goto Y."/>
            <person name="Shimizu F."/>
            <person name="Wakebe H."/>
            <person name="Hishigaki H."/>
            <person name="Watanabe T."/>
            <person name="Sugiyama A."/>
            <person name="Takemoto M."/>
            <person name="Kawakami B."/>
            <person name="Yamazaki M."/>
            <person name="Watanabe K."/>
            <person name="Kumagai A."/>
            <person name="Itakura S."/>
            <person name="Fukuzumi Y."/>
            <person name="Fujimori Y."/>
            <person name="Komiyama M."/>
            <person name="Tashiro H."/>
            <person name="Tanigami A."/>
            <person name="Fujiwara T."/>
            <person name="Ono T."/>
            <person name="Yamada K."/>
            <person name="Fujii Y."/>
            <person name="Ozaki K."/>
            <person name="Hirao M."/>
            <person name="Ohmori Y."/>
            <person name="Kawabata A."/>
            <person name="Hikiji T."/>
            <person name="Kobatake N."/>
            <person name="Inagaki H."/>
            <person name="Ikema Y."/>
            <person name="Okamoto S."/>
            <person name="Okitani R."/>
            <person name="Kawakami T."/>
            <person name="Noguchi S."/>
            <person name="Itoh T."/>
            <person name="Shigeta K."/>
            <person name="Senba T."/>
            <person name="Matsumura K."/>
            <person name="Nakajima Y."/>
            <person name="Mizuno T."/>
            <person name="Morinaga M."/>
            <person name="Sasaki M."/>
            <person name="Togashi T."/>
            <person name="Oyama M."/>
            <person name="Hata H."/>
            <person name="Watanabe M."/>
            <person name="Komatsu T."/>
            <person name="Mizushima-Sugano J."/>
            <person name="Satoh T."/>
            <person name="Shirai Y."/>
            <person name="Takahashi Y."/>
            <person name="Nakagawa K."/>
            <person name="Okumura K."/>
            <person name="Nagase T."/>
            <person name="Nomura N."/>
            <person name="Kikuchi H."/>
            <person name="Masuho Y."/>
            <person name="Yamashita R."/>
            <person name="Nakai K."/>
            <person name="Yada T."/>
            <person name="Nakamura Y."/>
            <person name="Ohara O."/>
            <person name="Isogai T."/>
            <person name="Sugano S."/>
        </authorList>
    </citation>
    <scope>NUCLEOTIDE SEQUENCE [LARGE SCALE MRNA] (ISOFORM 1)</scope>
    <source>
        <tissue>Thalamus</tissue>
    </source>
</reference>
<reference key="4">
    <citation type="submission" date="2005-04" db="EMBL/GenBank/DDBJ databases">
        <authorList>
            <person name="Totoki Y."/>
            <person name="Toyoda A."/>
            <person name="Takeda T."/>
            <person name="Sakaki Y."/>
            <person name="Tanaka A."/>
            <person name="Yokoyama S."/>
        </authorList>
    </citation>
    <scope>NUCLEOTIDE SEQUENCE [LARGE SCALE MRNA]</scope>
    <source>
        <tissue>Cerebellum</tissue>
    </source>
</reference>
<reference key="5">
    <citation type="journal article" date="2005" name="Nature">
        <title>The DNA sequence of the human X chromosome.</title>
        <authorList>
            <person name="Ross M.T."/>
            <person name="Grafham D.V."/>
            <person name="Coffey A.J."/>
            <person name="Scherer S."/>
            <person name="McLay K."/>
            <person name="Muzny D."/>
            <person name="Platzer M."/>
            <person name="Howell G.R."/>
            <person name="Burrows C."/>
            <person name="Bird C.P."/>
            <person name="Frankish A."/>
            <person name="Lovell F.L."/>
            <person name="Howe K.L."/>
            <person name="Ashurst J.L."/>
            <person name="Fulton R.S."/>
            <person name="Sudbrak R."/>
            <person name="Wen G."/>
            <person name="Jones M.C."/>
            <person name="Hurles M.E."/>
            <person name="Andrews T.D."/>
            <person name="Scott C.E."/>
            <person name="Searle S."/>
            <person name="Ramser J."/>
            <person name="Whittaker A."/>
            <person name="Deadman R."/>
            <person name="Carter N.P."/>
            <person name="Hunt S.E."/>
            <person name="Chen R."/>
            <person name="Cree A."/>
            <person name="Gunaratne P."/>
            <person name="Havlak P."/>
            <person name="Hodgson A."/>
            <person name="Metzker M.L."/>
            <person name="Richards S."/>
            <person name="Scott G."/>
            <person name="Steffen D."/>
            <person name="Sodergren E."/>
            <person name="Wheeler D.A."/>
            <person name="Worley K.C."/>
            <person name="Ainscough R."/>
            <person name="Ambrose K.D."/>
            <person name="Ansari-Lari M.A."/>
            <person name="Aradhya S."/>
            <person name="Ashwell R.I."/>
            <person name="Babbage A.K."/>
            <person name="Bagguley C.L."/>
            <person name="Ballabio A."/>
            <person name="Banerjee R."/>
            <person name="Barker G.E."/>
            <person name="Barlow K.F."/>
            <person name="Barrett I.P."/>
            <person name="Bates K.N."/>
            <person name="Beare D.M."/>
            <person name="Beasley H."/>
            <person name="Beasley O."/>
            <person name="Beck A."/>
            <person name="Bethel G."/>
            <person name="Blechschmidt K."/>
            <person name="Brady N."/>
            <person name="Bray-Allen S."/>
            <person name="Bridgeman A.M."/>
            <person name="Brown A.J."/>
            <person name="Brown M.J."/>
            <person name="Bonnin D."/>
            <person name="Bruford E.A."/>
            <person name="Buhay C."/>
            <person name="Burch P."/>
            <person name="Burford D."/>
            <person name="Burgess J."/>
            <person name="Burrill W."/>
            <person name="Burton J."/>
            <person name="Bye J.M."/>
            <person name="Carder C."/>
            <person name="Carrel L."/>
            <person name="Chako J."/>
            <person name="Chapman J.C."/>
            <person name="Chavez D."/>
            <person name="Chen E."/>
            <person name="Chen G."/>
            <person name="Chen Y."/>
            <person name="Chen Z."/>
            <person name="Chinault C."/>
            <person name="Ciccodicola A."/>
            <person name="Clark S.Y."/>
            <person name="Clarke G."/>
            <person name="Clee C.M."/>
            <person name="Clegg S."/>
            <person name="Clerc-Blankenburg K."/>
            <person name="Clifford K."/>
            <person name="Cobley V."/>
            <person name="Cole C.G."/>
            <person name="Conquer J.S."/>
            <person name="Corby N."/>
            <person name="Connor R.E."/>
            <person name="David R."/>
            <person name="Davies J."/>
            <person name="Davis C."/>
            <person name="Davis J."/>
            <person name="Delgado O."/>
            <person name="Deshazo D."/>
            <person name="Dhami P."/>
            <person name="Ding Y."/>
            <person name="Dinh H."/>
            <person name="Dodsworth S."/>
            <person name="Draper H."/>
            <person name="Dugan-Rocha S."/>
            <person name="Dunham A."/>
            <person name="Dunn M."/>
            <person name="Durbin K.J."/>
            <person name="Dutta I."/>
            <person name="Eades T."/>
            <person name="Ellwood M."/>
            <person name="Emery-Cohen A."/>
            <person name="Errington H."/>
            <person name="Evans K.L."/>
            <person name="Faulkner L."/>
            <person name="Francis F."/>
            <person name="Frankland J."/>
            <person name="Fraser A.E."/>
            <person name="Galgoczy P."/>
            <person name="Gilbert J."/>
            <person name="Gill R."/>
            <person name="Gloeckner G."/>
            <person name="Gregory S.G."/>
            <person name="Gribble S."/>
            <person name="Griffiths C."/>
            <person name="Grocock R."/>
            <person name="Gu Y."/>
            <person name="Gwilliam R."/>
            <person name="Hamilton C."/>
            <person name="Hart E.A."/>
            <person name="Hawes A."/>
            <person name="Heath P.D."/>
            <person name="Heitmann K."/>
            <person name="Hennig S."/>
            <person name="Hernandez J."/>
            <person name="Hinzmann B."/>
            <person name="Ho S."/>
            <person name="Hoffs M."/>
            <person name="Howden P.J."/>
            <person name="Huckle E.J."/>
            <person name="Hume J."/>
            <person name="Hunt P.J."/>
            <person name="Hunt A.R."/>
            <person name="Isherwood J."/>
            <person name="Jacob L."/>
            <person name="Johnson D."/>
            <person name="Jones S."/>
            <person name="de Jong P.J."/>
            <person name="Joseph S.S."/>
            <person name="Keenan S."/>
            <person name="Kelly S."/>
            <person name="Kershaw J.K."/>
            <person name="Khan Z."/>
            <person name="Kioschis P."/>
            <person name="Klages S."/>
            <person name="Knights A.J."/>
            <person name="Kosiura A."/>
            <person name="Kovar-Smith C."/>
            <person name="Laird G.K."/>
            <person name="Langford C."/>
            <person name="Lawlor S."/>
            <person name="Leversha M."/>
            <person name="Lewis L."/>
            <person name="Liu W."/>
            <person name="Lloyd C."/>
            <person name="Lloyd D.M."/>
            <person name="Loulseged H."/>
            <person name="Loveland J.E."/>
            <person name="Lovell J.D."/>
            <person name="Lozado R."/>
            <person name="Lu J."/>
            <person name="Lyne R."/>
            <person name="Ma J."/>
            <person name="Maheshwari M."/>
            <person name="Matthews L.H."/>
            <person name="McDowall J."/>
            <person name="McLaren S."/>
            <person name="McMurray A."/>
            <person name="Meidl P."/>
            <person name="Meitinger T."/>
            <person name="Milne S."/>
            <person name="Miner G."/>
            <person name="Mistry S.L."/>
            <person name="Morgan M."/>
            <person name="Morris S."/>
            <person name="Mueller I."/>
            <person name="Mullikin J.C."/>
            <person name="Nguyen N."/>
            <person name="Nordsiek G."/>
            <person name="Nyakatura G."/>
            <person name="O'dell C.N."/>
            <person name="Okwuonu G."/>
            <person name="Palmer S."/>
            <person name="Pandian R."/>
            <person name="Parker D."/>
            <person name="Parrish J."/>
            <person name="Pasternak S."/>
            <person name="Patel D."/>
            <person name="Pearce A.V."/>
            <person name="Pearson D.M."/>
            <person name="Pelan S.E."/>
            <person name="Perez L."/>
            <person name="Porter K.M."/>
            <person name="Ramsey Y."/>
            <person name="Reichwald K."/>
            <person name="Rhodes S."/>
            <person name="Ridler K.A."/>
            <person name="Schlessinger D."/>
            <person name="Schueler M.G."/>
            <person name="Sehra H.K."/>
            <person name="Shaw-Smith C."/>
            <person name="Shen H."/>
            <person name="Sheridan E.M."/>
            <person name="Shownkeen R."/>
            <person name="Skuce C.D."/>
            <person name="Smith M.L."/>
            <person name="Sotheran E.C."/>
            <person name="Steingruber H.E."/>
            <person name="Steward C.A."/>
            <person name="Storey R."/>
            <person name="Swann R.M."/>
            <person name="Swarbreck D."/>
            <person name="Tabor P.E."/>
            <person name="Taudien S."/>
            <person name="Taylor T."/>
            <person name="Teague B."/>
            <person name="Thomas K."/>
            <person name="Thorpe A."/>
            <person name="Timms K."/>
            <person name="Tracey A."/>
            <person name="Trevanion S."/>
            <person name="Tromans A.C."/>
            <person name="d'Urso M."/>
            <person name="Verduzco D."/>
            <person name="Villasana D."/>
            <person name="Waldron L."/>
            <person name="Wall M."/>
            <person name="Wang Q."/>
            <person name="Warren J."/>
            <person name="Warry G.L."/>
            <person name="Wei X."/>
            <person name="West A."/>
            <person name="Whitehead S.L."/>
            <person name="Whiteley M.N."/>
            <person name="Wilkinson J.E."/>
            <person name="Willey D.L."/>
            <person name="Williams G."/>
            <person name="Williams L."/>
            <person name="Williamson A."/>
            <person name="Williamson H."/>
            <person name="Wilming L."/>
            <person name="Woodmansey R.L."/>
            <person name="Wray P.W."/>
            <person name="Yen J."/>
            <person name="Zhang J."/>
            <person name="Zhou J."/>
            <person name="Zoghbi H."/>
            <person name="Zorilla S."/>
            <person name="Buck D."/>
            <person name="Reinhardt R."/>
            <person name="Poustka A."/>
            <person name="Rosenthal A."/>
            <person name="Lehrach H."/>
            <person name="Meindl A."/>
            <person name="Minx P.J."/>
            <person name="Hillier L.W."/>
            <person name="Willard H.F."/>
            <person name="Wilson R.K."/>
            <person name="Waterston R.H."/>
            <person name="Rice C.M."/>
            <person name="Vaudin M."/>
            <person name="Coulson A."/>
            <person name="Nelson D.L."/>
            <person name="Weinstock G."/>
            <person name="Sulston J.E."/>
            <person name="Durbin R.M."/>
            <person name="Hubbard T."/>
            <person name="Gibbs R.A."/>
            <person name="Beck S."/>
            <person name="Rogers J."/>
            <person name="Bentley D.R."/>
        </authorList>
    </citation>
    <scope>NUCLEOTIDE SEQUENCE [LARGE SCALE GENOMIC DNA]</scope>
</reference>
<reference key="6">
    <citation type="journal article" date="2004" name="Genome Res.">
        <title>The status, quality, and expansion of the NIH full-length cDNA project: the Mammalian Gene Collection (MGC).</title>
        <authorList>
            <consortium name="The MGC Project Team"/>
        </authorList>
    </citation>
    <scope>NUCLEOTIDE SEQUENCE [LARGE SCALE MRNA] (ISOFORMS 1 AND 2)</scope>
    <source>
        <tissue>Colon</tissue>
        <tissue>PNS</tissue>
    </source>
</reference>
<reference key="7">
    <citation type="journal article" date="2014" name="J. Proteomics">
        <title>An enzyme assisted RP-RPLC approach for in-depth analysis of human liver phosphoproteome.</title>
        <authorList>
            <person name="Bian Y."/>
            <person name="Song C."/>
            <person name="Cheng K."/>
            <person name="Dong M."/>
            <person name="Wang F."/>
            <person name="Huang J."/>
            <person name="Sun D."/>
            <person name="Wang L."/>
            <person name="Ye M."/>
            <person name="Zou H."/>
        </authorList>
    </citation>
    <scope>IDENTIFICATION BY MASS SPECTROMETRY [LARGE SCALE ANALYSIS]</scope>
    <source>
        <tissue>Liver</tissue>
    </source>
</reference>
<reference key="8">
    <citation type="journal article" date="2010" name="Biochemistry">
        <title>Crystal structure of human senescence marker protein 30: insights linking structural, enzymatic, and physiological functions.</title>
        <authorList>
            <person name="Chakraborti S."/>
            <person name="Bahnson B.J."/>
        </authorList>
    </citation>
    <scope>X-RAY CRYSTALLOGRAPHY (1.42 ANGSTROMS) IN COMPLEXES WITH CALCIUM AND ZINC IONS</scope>
    <scope>CATALYTIC ACTIVITY</scope>
    <scope>BIOPHYSICOCHEMICAL PROPERTIES</scope>
    <scope>COFACTOR</scope>
    <scope>MUTAGENESIS OF GLU-18; ASN-103; ASN-154 AND ASP-204</scope>
</reference>
<reference key="9">
    <citation type="journal article" date="2013" name="PLoS ONE">
        <title>Structural basis of the gamma-lactone-ring formation in ascorbic acid biosynthesis by the senescence marker protein-30/gluconolactonase.</title>
        <authorList>
            <person name="Aizawa S."/>
            <person name="Senda M."/>
            <person name="Harada A."/>
            <person name="Maruyama N."/>
            <person name="Ishida T."/>
            <person name="Aigaki T."/>
            <person name="Ishigami A."/>
            <person name="Senda T."/>
        </authorList>
    </citation>
    <scope>X-RAY CRYSTALLOGRAPHY (1.5 ANGSTROMS) IN COMPLEX WITH DIVALENT METAL CATION AND SUBSTRATE ANALOG</scope>
    <scope>CATALYTIC ACTIVITY</scope>
    <scope>COFACTOR</scope>
    <scope>ACTIVE SITE</scope>
    <scope>SUBUNIT</scope>
</reference>
<dbReference type="EC" id="3.1.1.17"/>
<dbReference type="EMBL" id="D31815">
    <property type="protein sequence ID" value="BAA06602.1"/>
    <property type="molecule type" value="mRNA"/>
</dbReference>
<dbReference type="EMBL" id="AB028125">
    <property type="protein sequence ID" value="BAA78693.1"/>
    <property type="molecule type" value="mRNA"/>
</dbReference>
<dbReference type="EMBL" id="AB032064">
    <property type="protein sequence ID" value="BAA84082.1"/>
    <property type="molecule type" value="mRNA"/>
</dbReference>
<dbReference type="EMBL" id="AK290136">
    <property type="protein sequence ID" value="BAF82825.1"/>
    <property type="molecule type" value="mRNA"/>
</dbReference>
<dbReference type="EMBL" id="AK223360">
    <property type="protein sequence ID" value="BAD97080.1"/>
    <property type="molecule type" value="mRNA"/>
</dbReference>
<dbReference type="EMBL" id="AL513366">
    <property type="status" value="NOT_ANNOTATED_CDS"/>
    <property type="molecule type" value="Genomic_DNA"/>
</dbReference>
<dbReference type="EMBL" id="BC050371">
    <property type="protein sequence ID" value="AAH50371.1"/>
    <property type="molecule type" value="mRNA"/>
</dbReference>
<dbReference type="EMBL" id="BC073173">
    <property type="protein sequence ID" value="AAH73173.1"/>
    <property type="molecule type" value="mRNA"/>
</dbReference>
<dbReference type="CCDS" id="CCDS14272.1">
    <molecule id="Q15493-1"/>
</dbReference>
<dbReference type="CCDS" id="CCDS75968.1">
    <molecule id="Q15493-2"/>
</dbReference>
<dbReference type="PIR" id="S60035">
    <property type="entry name" value="S60035"/>
</dbReference>
<dbReference type="RefSeq" id="NP_001269777.1">
    <property type="nucleotide sequence ID" value="NM_001282848.1"/>
</dbReference>
<dbReference type="RefSeq" id="NP_001269778.1">
    <molecule id="Q15493-2"/>
    <property type="nucleotide sequence ID" value="NM_001282849.2"/>
</dbReference>
<dbReference type="RefSeq" id="NP_004674.1">
    <molecule id="Q15493-1"/>
    <property type="nucleotide sequence ID" value="NM_004683.6"/>
</dbReference>
<dbReference type="RefSeq" id="NP_690608.1">
    <molecule id="Q15493-1"/>
    <property type="nucleotide sequence ID" value="NM_152869.4"/>
</dbReference>
<dbReference type="RefSeq" id="XP_006724630.1">
    <molecule id="Q15493-2"/>
    <property type="nucleotide sequence ID" value="XM_006724567.3"/>
</dbReference>
<dbReference type="RefSeq" id="XP_054184061.1">
    <molecule id="Q15493-2"/>
    <property type="nucleotide sequence ID" value="XM_054328086.1"/>
</dbReference>
<dbReference type="PDB" id="3G4E">
    <property type="method" value="X-ray"/>
    <property type="resolution" value="1.42 A"/>
    <property type="chains" value="A/B=3-299"/>
</dbReference>
<dbReference type="PDB" id="3G4H">
    <property type="method" value="X-ray"/>
    <property type="resolution" value="1.92 A"/>
    <property type="chains" value="A/B=3-299"/>
</dbReference>
<dbReference type="PDB" id="4GNB">
    <property type="method" value="X-ray"/>
    <property type="resolution" value="1.50 A"/>
    <property type="chains" value="A/B=1-299"/>
</dbReference>
<dbReference type="PDB" id="4GNC">
    <property type="method" value="X-ray"/>
    <property type="resolution" value="1.75 A"/>
    <property type="chains" value="A/B=1-299"/>
</dbReference>
<dbReference type="PDBsum" id="3G4E"/>
<dbReference type="PDBsum" id="3G4H"/>
<dbReference type="PDBsum" id="4GNB"/>
<dbReference type="PDBsum" id="4GNC"/>
<dbReference type="SMR" id="Q15493"/>
<dbReference type="BioGRID" id="114557">
    <property type="interactions" value="10"/>
</dbReference>
<dbReference type="FunCoup" id="Q15493">
    <property type="interactions" value="597"/>
</dbReference>
<dbReference type="IntAct" id="Q15493">
    <property type="interactions" value="2"/>
</dbReference>
<dbReference type="STRING" id="9606.ENSP00000380365"/>
<dbReference type="DrugBank" id="DB11093">
    <property type="generic name" value="Calcium citrate"/>
</dbReference>
<dbReference type="DrugBank" id="DB11348">
    <property type="generic name" value="Calcium Phosphate"/>
</dbReference>
<dbReference type="DrugBank" id="DB14481">
    <property type="generic name" value="Calcium phosphate dihydrate"/>
</dbReference>
<dbReference type="iPTMnet" id="Q15493"/>
<dbReference type="PhosphoSitePlus" id="Q15493"/>
<dbReference type="BioMuta" id="RGN"/>
<dbReference type="DMDM" id="3334328"/>
<dbReference type="jPOST" id="Q15493"/>
<dbReference type="MassIVE" id="Q15493"/>
<dbReference type="PaxDb" id="9606-ENSP00000380365"/>
<dbReference type="PeptideAtlas" id="Q15493"/>
<dbReference type="ProteomicsDB" id="60611">
    <molecule id="Q15493-1"/>
</dbReference>
<dbReference type="ProteomicsDB" id="60612">
    <molecule id="Q15493-2"/>
</dbReference>
<dbReference type="Antibodypedia" id="25260">
    <property type="antibodies" value="181 antibodies from 27 providers"/>
</dbReference>
<dbReference type="DNASU" id="9104"/>
<dbReference type="Ensembl" id="ENST00000336169.3">
    <molecule id="Q15493-1"/>
    <property type="protein sequence ID" value="ENSP00000338400.3"/>
    <property type="gene ID" value="ENSG00000130988.13"/>
</dbReference>
<dbReference type="Ensembl" id="ENST00000352078.8">
    <molecule id="Q15493-1"/>
    <property type="protein sequence ID" value="ENSP00000253303.4"/>
    <property type="gene ID" value="ENSG00000130988.13"/>
</dbReference>
<dbReference type="Ensembl" id="ENST00000397180.6">
    <molecule id="Q15493-1"/>
    <property type="protein sequence ID" value="ENSP00000380365.1"/>
    <property type="gene ID" value="ENSG00000130988.13"/>
</dbReference>
<dbReference type="Ensembl" id="ENST00000457380.5">
    <molecule id="Q15493-2"/>
    <property type="protein sequence ID" value="ENSP00000406568.1"/>
    <property type="gene ID" value="ENSG00000130988.13"/>
</dbReference>
<dbReference type="GeneID" id="9104"/>
<dbReference type="KEGG" id="hsa:9104"/>
<dbReference type="MANE-Select" id="ENST00000397180.6">
    <property type="protein sequence ID" value="ENSP00000380365.1"/>
    <property type="RefSeq nucleotide sequence ID" value="NM_152869.4"/>
    <property type="RefSeq protein sequence ID" value="NP_690608.1"/>
</dbReference>
<dbReference type="UCSC" id="uc010nhp.2">
    <molecule id="Q15493-1"/>
    <property type="organism name" value="human"/>
</dbReference>
<dbReference type="AGR" id="HGNC:9989"/>
<dbReference type="CTD" id="9104"/>
<dbReference type="DisGeNET" id="9104"/>
<dbReference type="GeneCards" id="RGN"/>
<dbReference type="HGNC" id="HGNC:9989">
    <property type="gene designation" value="RGN"/>
</dbReference>
<dbReference type="HPA" id="ENSG00000130988">
    <property type="expression patterns" value="Group enriched (adrenal gland, liver)"/>
</dbReference>
<dbReference type="MIM" id="300212">
    <property type="type" value="gene"/>
</dbReference>
<dbReference type="neXtProt" id="NX_Q15493"/>
<dbReference type="OpenTargets" id="ENSG00000130988"/>
<dbReference type="PharmGKB" id="PA34359"/>
<dbReference type="VEuPathDB" id="HostDB:ENSG00000130988"/>
<dbReference type="eggNOG" id="KOG4499">
    <property type="taxonomic scope" value="Eukaryota"/>
</dbReference>
<dbReference type="GeneTree" id="ENSGT00390000014995"/>
<dbReference type="HOGENOM" id="CLU_036110_3_2_1"/>
<dbReference type="InParanoid" id="Q15493"/>
<dbReference type="OMA" id="WAGTMRY"/>
<dbReference type="OrthoDB" id="423498at2759"/>
<dbReference type="PAN-GO" id="Q15493">
    <property type="GO annotations" value="3 GO annotations based on evolutionary models"/>
</dbReference>
<dbReference type="PhylomeDB" id="Q15493"/>
<dbReference type="TreeFam" id="TF323663"/>
<dbReference type="BRENDA" id="3.1.1.17">
    <property type="organism ID" value="2681"/>
</dbReference>
<dbReference type="PathwayCommons" id="Q15493"/>
<dbReference type="SignaLink" id="Q15493"/>
<dbReference type="BioGRID-ORCS" id="9104">
    <property type="hits" value="11 hits in 775 CRISPR screens"/>
</dbReference>
<dbReference type="ChiTaRS" id="RGN">
    <property type="organism name" value="human"/>
</dbReference>
<dbReference type="EvolutionaryTrace" id="Q15493"/>
<dbReference type="GeneWiki" id="RGN_(gene)"/>
<dbReference type="GenomeRNAi" id="9104"/>
<dbReference type="Pharos" id="Q15493">
    <property type="development level" value="Tbio"/>
</dbReference>
<dbReference type="PRO" id="PR:Q15493"/>
<dbReference type="Proteomes" id="UP000005640">
    <property type="component" value="Chromosome X"/>
</dbReference>
<dbReference type="RNAct" id="Q15493">
    <property type="molecule type" value="protein"/>
</dbReference>
<dbReference type="Bgee" id="ENSG00000130988">
    <property type="expression patterns" value="Expressed in right adrenal gland cortex and 170 other cell types or tissues"/>
</dbReference>
<dbReference type="ExpressionAtlas" id="Q15493">
    <property type="expression patterns" value="baseline and differential"/>
</dbReference>
<dbReference type="GO" id="GO:0005737">
    <property type="term" value="C:cytoplasm"/>
    <property type="evidence" value="ECO:0000250"/>
    <property type="project" value="UniProtKB"/>
</dbReference>
<dbReference type="GO" id="GO:0005634">
    <property type="term" value="C:nucleus"/>
    <property type="evidence" value="ECO:0000250"/>
    <property type="project" value="UniProtKB"/>
</dbReference>
<dbReference type="GO" id="GO:0005509">
    <property type="term" value="F:calcium ion binding"/>
    <property type="evidence" value="ECO:0000314"/>
    <property type="project" value="UniProtKB"/>
</dbReference>
<dbReference type="GO" id="GO:0030234">
    <property type="term" value="F:enzyme regulator activity"/>
    <property type="evidence" value="ECO:0007669"/>
    <property type="project" value="InterPro"/>
</dbReference>
<dbReference type="GO" id="GO:0004341">
    <property type="term" value="F:gluconolactonase activity"/>
    <property type="evidence" value="ECO:0000314"/>
    <property type="project" value="UniProtKB"/>
</dbReference>
<dbReference type="GO" id="GO:0008270">
    <property type="term" value="F:zinc ion binding"/>
    <property type="evidence" value="ECO:0000314"/>
    <property type="project" value="UniProtKB"/>
</dbReference>
<dbReference type="GO" id="GO:0006874">
    <property type="term" value="P:intracellular calcium ion homeostasis"/>
    <property type="evidence" value="ECO:0000250"/>
    <property type="project" value="UniProtKB"/>
</dbReference>
<dbReference type="GO" id="GO:0032781">
    <property type="term" value="P:positive regulation of ATP-dependent activity"/>
    <property type="evidence" value="ECO:0000250"/>
    <property type="project" value="UniProtKB"/>
</dbReference>
<dbReference type="GO" id="GO:0050848">
    <property type="term" value="P:regulation of calcium-mediated signaling"/>
    <property type="evidence" value="ECO:0000250"/>
    <property type="project" value="UniProtKB"/>
</dbReference>
<dbReference type="FunFam" id="2.120.10.30:FF:000027">
    <property type="entry name" value="Regucalcin homologue"/>
    <property type="match status" value="1"/>
</dbReference>
<dbReference type="Gene3D" id="2.120.10.30">
    <property type="entry name" value="TolB, C-terminal domain"/>
    <property type="match status" value="1"/>
</dbReference>
<dbReference type="InterPro" id="IPR011042">
    <property type="entry name" value="6-blade_b-propeller_TolB-like"/>
</dbReference>
<dbReference type="InterPro" id="IPR008367">
    <property type="entry name" value="Regucalcin"/>
</dbReference>
<dbReference type="InterPro" id="IPR013658">
    <property type="entry name" value="SGL"/>
</dbReference>
<dbReference type="InterPro" id="IPR005511">
    <property type="entry name" value="SMP-30"/>
</dbReference>
<dbReference type="PANTHER" id="PTHR10907">
    <property type="entry name" value="REGUCALCIN"/>
    <property type="match status" value="1"/>
</dbReference>
<dbReference type="PANTHER" id="PTHR10907:SF54">
    <property type="entry name" value="REGUCALCIN"/>
    <property type="match status" value="1"/>
</dbReference>
<dbReference type="Pfam" id="PF08450">
    <property type="entry name" value="SGL"/>
    <property type="match status" value="1"/>
</dbReference>
<dbReference type="PRINTS" id="PR01791">
    <property type="entry name" value="REGUCALCIN"/>
</dbReference>
<dbReference type="PRINTS" id="PR01790">
    <property type="entry name" value="SMP30FAMILY"/>
</dbReference>
<dbReference type="SUPFAM" id="SSF63829">
    <property type="entry name" value="Calcium-dependent phosphotriesterase"/>
    <property type="match status" value="1"/>
</dbReference>
<evidence type="ECO:0000250" key="1"/>
<evidence type="ECO:0000250" key="2">
    <source>
        <dbReference type="UniProtKB" id="Q64374"/>
    </source>
</evidence>
<evidence type="ECO:0000269" key="3">
    <source>
    </source>
</evidence>
<evidence type="ECO:0000269" key="4">
    <source>
    </source>
</evidence>
<evidence type="ECO:0000303" key="5">
    <source>
    </source>
</evidence>
<evidence type="ECO:0000305" key="6"/>
<evidence type="ECO:0000305" key="7">
    <source>
    </source>
</evidence>
<evidence type="ECO:0007829" key="8">
    <source>
        <dbReference type="PDB" id="3G4E"/>
    </source>
</evidence>
<evidence type="ECO:0007829" key="9">
    <source>
        <dbReference type="PDB" id="4GNB"/>
    </source>
</evidence>
<name>RGN_HUMAN</name>
<sequence>MSSIKIECVLPENCRCGESPVWEEVSNSLLFVDIPAKKVCRWDSFTKQVQRVTMDAPVSSVALRQSGGYVATIGTKFCALNWKEQSAVVLATVDNDKKNNRFNDGKVDPAGRYFAGTMAEETAPAVLERHQGALYSLFPDHHVKKYFDQVDISNGLDWSLDHKIFYYIDSLSYSVDAFDYDLQTGQISNRRSVYKLEKEEQIPDGMCIDAEGKLWVACYNGGRVIRLDPVTGKRLQTVKLPVDKTTSCCFGGKNYSEMYVTCARDGMDPEGLLRQPEAGGIFKITGLGVKGIAPYSYAG</sequence>
<organism>
    <name type="scientific">Homo sapiens</name>
    <name type="common">Human</name>
    <dbReference type="NCBI Taxonomy" id="9606"/>
    <lineage>
        <taxon>Eukaryota</taxon>
        <taxon>Metazoa</taxon>
        <taxon>Chordata</taxon>
        <taxon>Craniata</taxon>
        <taxon>Vertebrata</taxon>
        <taxon>Euteleostomi</taxon>
        <taxon>Mammalia</taxon>
        <taxon>Eutheria</taxon>
        <taxon>Euarchontoglires</taxon>
        <taxon>Primates</taxon>
        <taxon>Haplorrhini</taxon>
        <taxon>Catarrhini</taxon>
        <taxon>Hominidae</taxon>
        <taxon>Homo</taxon>
    </lineage>
</organism>
<gene>
    <name type="primary">RGN</name>
    <name type="synonym">SMP30</name>
</gene>
<feature type="chain" id="PRO_0000173046" description="Regucalcin">
    <location>
        <begin position="1"/>
        <end position="299"/>
    </location>
</feature>
<feature type="active site" description="Proton donor/acceptor" evidence="7">
    <location>
        <position position="204"/>
    </location>
</feature>
<feature type="binding site" evidence="4">
    <location>
        <position position="18"/>
    </location>
    <ligand>
        <name>a divalent metal cation</name>
        <dbReference type="ChEBI" id="CHEBI:60240"/>
    </ligand>
</feature>
<feature type="binding site">
    <location>
        <position position="101"/>
    </location>
    <ligand>
        <name>substrate</name>
    </ligand>
</feature>
<feature type="binding site">
    <location>
        <position position="103"/>
    </location>
    <ligand>
        <name>substrate</name>
    </ligand>
</feature>
<feature type="binding site" evidence="1">
    <location>
        <position position="121"/>
    </location>
    <ligand>
        <name>substrate</name>
    </ligand>
</feature>
<feature type="binding site" evidence="4">
    <location>
        <position position="154"/>
    </location>
    <ligand>
        <name>a divalent metal cation</name>
        <dbReference type="ChEBI" id="CHEBI:60240"/>
    </ligand>
</feature>
<feature type="binding site" evidence="4">
    <location>
        <position position="204"/>
    </location>
    <ligand>
        <name>a divalent metal cation</name>
        <dbReference type="ChEBI" id="CHEBI:60240"/>
    </ligand>
</feature>
<feature type="modified residue" description="N6-succinyllysine" evidence="2">
    <location>
        <position position="144"/>
    </location>
</feature>
<feature type="modified residue" description="N6-succinyllysine" evidence="2">
    <location>
        <position position="244"/>
    </location>
</feature>
<feature type="modified residue" description="N6-succinyllysine" evidence="2">
    <location>
        <position position="253"/>
    </location>
</feature>
<feature type="splice variant" id="VSP_025456" description="In isoform 2." evidence="5">
    <location>
        <begin position="116"/>
        <end position="187"/>
    </location>
</feature>
<feature type="splice variant" id="VSP_025457" description="In isoform 2." evidence="5">
    <original>S</original>
    <variation>A</variation>
    <location>
        <position position="188"/>
    </location>
</feature>
<feature type="mutagenesis site" description="Reduces enzyme activity by about 90%." evidence="3">
    <original>E</original>
    <variation>A</variation>
    <location>
        <position position="18"/>
    </location>
</feature>
<feature type="mutagenesis site" description="Reduces enzyme activity by about 95%." evidence="3">
    <original>N</original>
    <variation>A</variation>
    <location>
        <position position="103"/>
    </location>
</feature>
<feature type="mutagenesis site" description="Reduces enzyme activity by about 95%." evidence="3">
    <original>N</original>
    <variation>A</variation>
    <location>
        <position position="154"/>
    </location>
</feature>
<feature type="mutagenesis site" description="Reduces enzyme activity by over 98%." evidence="3">
    <original>D</original>
    <variation>A</variation>
    <location>
        <position position="204"/>
    </location>
</feature>
<feature type="sequence conflict" description="In Ref. 4; BAD97080." evidence="6" ref="4">
    <original>IA</original>
    <variation>TS</variation>
    <location>
        <begin position="292"/>
        <end position="293"/>
    </location>
</feature>
<feature type="strand" evidence="8">
    <location>
        <begin position="5"/>
        <end position="10"/>
    </location>
</feature>
<feature type="strand" evidence="8">
    <location>
        <begin position="15"/>
        <end position="23"/>
    </location>
</feature>
<feature type="turn" evidence="8">
    <location>
        <begin position="24"/>
        <end position="27"/>
    </location>
</feature>
<feature type="strand" evidence="8">
    <location>
        <begin position="28"/>
        <end position="33"/>
    </location>
</feature>
<feature type="turn" evidence="8">
    <location>
        <begin position="34"/>
        <end position="37"/>
    </location>
</feature>
<feature type="strand" evidence="8">
    <location>
        <begin position="38"/>
        <end position="43"/>
    </location>
</feature>
<feature type="turn" evidence="8">
    <location>
        <begin position="44"/>
        <end position="46"/>
    </location>
</feature>
<feature type="strand" evidence="8">
    <location>
        <begin position="49"/>
        <end position="53"/>
    </location>
</feature>
<feature type="strand" evidence="8">
    <location>
        <begin position="58"/>
        <end position="64"/>
    </location>
</feature>
<feature type="strand" evidence="8">
    <location>
        <begin position="67"/>
        <end position="73"/>
    </location>
</feature>
<feature type="strand" evidence="8">
    <location>
        <begin position="76"/>
        <end position="81"/>
    </location>
</feature>
<feature type="turn" evidence="8">
    <location>
        <begin position="82"/>
        <end position="85"/>
    </location>
</feature>
<feature type="strand" evidence="8">
    <location>
        <begin position="86"/>
        <end position="92"/>
    </location>
</feature>
<feature type="strand" evidence="8">
    <location>
        <begin position="98"/>
        <end position="107"/>
    </location>
</feature>
<feature type="strand" evidence="8">
    <location>
        <begin position="113"/>
        <end position="119"/>
    </location>
</feature>
<feature type="strand" evidence="8">
    <location>
        <begin position="132"/>
        <end position="137"/>
    </location>
</feature>
<feature type="strand" evidence="8">
    <location>
        <begin position="143"/>
        <end position="158"/>
    </location>
</feature>
<feature type="strand" evidence="8">
    <location>
        <begin position="164"/>
        <end position="169"/>
    </location>
</feature>
<feature type="helix" evidence="8">
    <location>
        <begin position="170"/>
        <end position="172"/>
    </location>
</feature>
<feature type="strand" evidence="8">
    <location>
        <begin position="174"/>
        <end position="180"/>
    </location>
</feature>
<feature type="turn" evidence="8">
    <location>
        <begin position="182"/>
        <end position="184"/>
    </location>
</feature>
<feature type="strand" evidence="8">
    <location>
        <begin position="187"/>
        <end position="195"/>
    </location>
</feature>
<feature type="helix" evidence="8">
    <location>
        <begin position="198"/>
        <end position="200"/>
    </location>
</feature>
<feature type="strand" evidence="8">
    <location>
        <begin position="202"/>
        <end position="209"/>
    </location>
</feature>
<feature type="strand" evidence="8">
    <location>
        <begin position="214"/>
        <end position="219"/>
    </location>
</feature>
<feature type="turn" evidence="9">
    <location>
        <begin position="220"/>
        <end position="222"/>
    </location>
</feature>
<feature type="strand" evidence="8">
    <location>
        <begin position="223"/>
        <end position="227"/>
    </location>
</feature>
<feature type="turn" evidence="8">
    <location>
        <begin position="229"/>
        <end position="231"/>
    </location>
</feature>
<feature type="strand" evidence="8">
    <location>
        <begin position="234"/>
        <end position="239"/>
    </location>
</feature>
<feature type="strand" evidence="8">
    <location>
        <begin position="241"/>
        <end position="243"/>
    </location>
</feature>
<feature type="strand" evidence="8">
    <location>
        <begin position="245"/>
        <end position="252"/>
    </location>
</feature>
<feature type="helix" evidence="8">
    <location>
        <begin position="253"/>
        <end position="255"/>
    </location>
</feature>
<feature type="strand" evidence="8">
    <location>
        <begin position="257"/>
        <end position="263"/>
    </location>
</feature>
<feature type="helix" evidence="8">
    <location>
        <begin position="269"/>
        <end position="274"/>
    </location>
</feature>
<feature type="turn" evidence="8">
    <location>
        <begin position="276"/>
        <end position="279"/>
    </location>
</feature>
<feature type="strand" evidence="8">
    <location>
        <begin position="281"/>
        <end position="285"/>
    </location>
</feature>
<comment type="function">
    <text evidence="1">Gluconolactonase with low activity towards other sugar lactones, including gulonolactone and galactonolactone. Can also hydrolyze diisopropyl phosphorofluoridate and phenylacetate (in vitro). Calcium-binding protein. Modulates Ca(2+) signaling, and Ca(2+)-dependent cellular processes and enzyme activities (By similarity).</text>
</comment>
<comment type="catalytic activity">
    <reaction evidence="3 4">
        <text>D-glucono-1,5-lactone + H2O = D-gluconate + H(+)</text>
        <dbReference type="Rhea" id="RHEA:10440"/>
        <dbReference type="ChEBI" id="CHEBI:15377"/>
        <dbReference type="ChEBI" id="CHEBI:15378"/>
        <dbReference type="ChEBI" id="CHEBI:16217"/>
        <dbReference type="ChEBI" id="CHEBI:18391"/>
        <dbReference type="EC" id="3.1.1.17"/>
    </reaction>
</comment>
<comment type="cofactor">
    <cofactor evidence="3 4">
        <name>Zn(2+)</name>
        <dbReference type="ChEBI" id="CHEBI:29105"/>
    </cofactor>
    <cofactor evidence="3 4">
        <name>Mn(2+)</name>
        <dbReference type="ChEBI" id="CHEBI:29035"/>
    </cofactor>
    <cofactor evidence="3 4">
        <name>Ca(2+)</name>
        <dbReference type="ChEBI" id="CHEBI:29108"/>
    </cofactor>
    <cofactor evidence="3 4">
        <name>Mg(2+)</name>
        <dbReference type="ChEBI" id="CHEBI:18420"/>
    </cofactor>
    <text evidence="3 4">Binds 1 divalent metal cation per subunit. Most active with Zn(2+) and Mn(2+) ions. The physiological cofactor is most likely Ca(2+) or Mg(2+).</text>
</comment>
<comment type="biophysicochemical properties">
    <kinetics>
        <KM evidence="3">2.7 mM for gluconolactone (with Zn(2+) as cofactor)</KM>
        <KM evidence="3">0.6 mM for gluconolactone (with Mn(2+) as cofactor)</KM>
        <KM evidence="3">1.3 mM for gluconolactone (with Mg(2+) as cofactor)</KM>
        <KM evidence="3">3.7 mM for gluconolactone (with Ca(2+) as cofactor)</KM>
    </kinetics>
</comment>
<comment type="subunit">
    <text evidence="4">Monomer.</text>
</comment>
<comment type="subcellular location">
    <subcellularLocation>
        <location evidence="1">Cytoplasm</location>
    </subcellularLocation>
</comment>
<comment type="alternative products">
    <event type="alternative splicing"/>
    <isoform>
        <id>Q15493-1</id>
        <name>1</name>
        <sequence type="displayed"/>
    </isoform>
    <isoform>
        <id>Q15493-2</id>
        <name>2</name>
        <sequence type="described" ref="VSP_025456 VSP_025457"/>
    </isoform>
</comment>
<comment type="similarity">
    <text evidence="6">Belongs to the SMP-30/CGR1 family.</text>
</comment>
<comment type="caution">
    <text evidence="6">Gluconolactonase catalyzes a key step in ascorbic acid (vitamin C) biosynthesis, but primates lack the last enzyme in the pathway and are unable to synthesize vitamin C.</text>
</comment>
<accession>Q15493</accession>
<accession>A4FTW1</accession>
<accession>A8K271</accession>
<accession>Q53FC9</accession>
<accession>Q5JRR5</accession>